<proteinExistence type="inferred from homology"/>
<comment type="function">
    <text evidence="1">Ligates lysine onto the cytidine present at position 34 of the AUA codon-specific tRNA(Ile) that contains the anticodon CAU, in an ATP-dependent manner. Cytidine is converted to lysidine, thus changing the amino acid specificity of the tRNA from methionine to isoleucine.</text>
</comment>
<comment type="catalytic activity">
    <reaction evidence="1">
        <text>cytidine(34) in tRNA(Ile2) + L-lysine + ATP = lysidine(34) in tRNA(Ile2) + AMP + diphosphate + H(+)</text>
        <dbReference type="Rhea" id="RHEA:43744"/>
        <dbReference type="Rhea" id="RHEA-COMP:10625"/>
        <dbReference type="Rhea" id="RHEA-COMP:10670"/>
        <dbReference type="ChEBI" id="CHEBI:15378"/>
        <dbReference type="ChEBI" id="CHEBI:30616"/>
        <dbReference type="ChEBI" id="CHEBI:32551"/>
        <dbReference type="ChEBI" id="CHEBI:33019"/>
        <dbReference type="ChEBI" id="CHEBI:82748"/>
        <dbReference type="ChEBI" id="CHEBI:83665"/>
        <dbReference type="ChEBI" id="CHEBI:456215"/>
        <dbReference type="EC" id="6.3.4.19"/>
    </reaction>
</comment>
<comment type="subcellular location">
    <subcellularLocation>
        <location evidence="1">Cytoplasm</location>
    </subcellularLocation>
</comment>
<comment type="domain">
    <text>The N-terminal region contains the highly conserved SGGXDS motif, predicted to be a P-loop motif involved in ATP binding.</text>
</comment>
<comment type="similarity">
    <text evidence="1">Belongs to the tRNA(Ile)-lysidine synthase family.</text>
</comment>
<gene>
    <name evidence="1" type="primary">tilS</name>
    <name type="ordered locus">OTBS_2167</name>
</gene>
<protein>
    <recommendedName>
        <fullName evidence="1">tRNA(Ile)-lysidine synthase</fullName>
        <ecNumber evidence="1">6.3.4.19</ecNumber>
    </recommendedName>
    <alternativeName>
        <fullName evidence="1">tRNA(Ile)-2-lysyl-cytidine synthase</fullName>
    </alternativeName>
    <alternativeName>
        <fullName evidence="1">tRNA(Ile)-lysidine synthetase</fullName>
    </alternativeName>
</protein>
<evidence type="ECO:0000255" key="1">
    <source>
        <dbReference type="HAMAP-Rule" id="MF_01161"/>
    </source>
</evidence>
<keyword id="KW-0067">ATP-binding</keyword>
<keyword id="KW-0963">Cytoplasm</keyword>
<keyword id="KW-0436">Ligase</keyword>
<keyword id="KW-0547">Nucleotide-binding</keyword>
<keyword id="KW-1185">Reference proteome</keyword>
<keyword id="KW-0819">tRNA processing</keyword>
<sequence>MNIEVNFCHNMEHFGAFEENPKLAIAVSGGTDSLALMLLVKHWNEKVKGEITVLTIDHHLRSESTSEADYVSSICQNIKLQHVTLHWIHKGITGNIQAQARKARYHLLTNYCQEHDILHLITGHHADDIVENFFIRLLRGAGLAGLSSHNIFFVNNVRIIRPLFNITKQDLKKYLEQQNIKWINDPSNNSNKYLRTQVRDLLKSMLISFQNNFTVELLKKRIMLSQMHLTRALDSVNNEIIHYVVYAVKIYSAGFAVIDRKLFRQASPEARYAILSYLLMIVGANTKPQRFSSLQHIILHDIQEYNTYKTLHGCIVEYSIQYIIIYREFGRCYPRSKVVSNSVVWDYRFKVVDNRKNNRMNLTIDYLKKSDYHLIKSYVESNQRNAYFNYSRKILFTFPVIKHLEKVIAIPHIKYYSDKTIQESVSFVFEPKLISRWFHYC</sequence>
<name>TILS_ORITB</name>
<accession>A5CFP2</accession>
<reference key="1">
    <citation type="journal article" date="2007" name="Proc. Natl. Acad. Sci. U.S.A.">
        <title>The Orientia tsutsugamushi genome reveals massive proliferation of conjugative type IV secretion system and host-cell interaction genes.</title>
        <authorList>
            <person name="Cho N.-H."/>
            <person name="Kim H.-R."/>
            <person name="Lee J.-H."/>
            <person name="Kim S.-Y."/>
            <person name="Kim J."/>
            <person name="Cha S."/>
            <person name="Kim S.-Y."/>
            <person name="Darby A.C."/>
            <person name="Fuxelius H.-H."/>
            <person name="Yin J."/>
            <person name="Kim J.H."/>
            <person name="Kim J."/>
            <person name="Lee S.J."/>
            <person name="Koh Y.-S."/>
            <person name="Jang W.-J."/>
            <person name="Park K.-H."/>
            <person name="Andersson S.G.E."/>
            <person name="Choi M.-S."/>
            <person name="Kim I.-S."/>
        </authorList>
    </citation>
    <scope>NUCLEOTIDE SEQUENCE [LARGE SCALE GENOMIC DNA]</scope>
    <source>
        <strain>Boryong</strain>
    </source>
</reference>
<feature type="chain" id="PRO_1000065621" description="tRNA(Ile)-lysidine synthase">
    <location>
        <begin position="1"/>
        <end position="441"/>
    </location>
</feature>
<feature type="binding site" evidence="1">
    <location>
        <begin position="28"/>
        <end position="33"/>
    </location>
    <ligand>
        <name>ATP</name>
        <dbReference type="ChEBI" id="CHEBI:30616"/>
    </ligand>
</feature>
<dbReference type="EC" id="6.3.4.19" evidence="1"/>
<dbReference type="EMBL" id="AM494475">
    <property type="protein sequence ID" value="CAM81262.1"/>
    <property type="molecule type" value="Genomic_DNA"/>
</dbReference>
<dbReference type="RefSeq" id="WP_011945183.1">
    <property type="nucleotide sequence ID" value="NC_009488.1"/>
</dbReference>
<dbReference type="SMR" id="A5CFP2"/>
<dbReference type="KEGG" id="ots:OTBS_2167"/>
<dbReference type="eggNOG" id="COG0037">
    <property type="taxonomic scope" value="Bacteria"/>
</dbReference>
<dbReference type="HOGENOM" id="CLU_018869_3_2_5"/>
<dbReference type="Proteomes" id="UP000001565">
    <property type="component" value="Chromosome"/>
</dbReference>
<dbReference type="GO" id="GO:0005737">
    <property type="term" value="C:cytoplasm"/>
    <property type="evidence" value="ECO:0007669"/>
    <property type="project" value="UniProtKB-SubCell"/>
</dbReference>
<dbReference type="GO" id="GO:0005524">
    <property type="term" value="F:ATP binding"/>
    <property type="evidence" value="ECO:0007669"/>
    <property type="project" value="UniProtKB-UniRule"/>
</dbReference>
<dbReference type="GO" id="GO:0032267">
    <property type="term" value="F:tRNA(Ile)-lysidine synthase activity"/>
    <property type="evidence" value="ECO:0007669"/>
    <property type="project" value="UniProtKB-EC"/>
</dbReference>
<dbReference type="GO" id="GO:0006400">
    <property type="term" value="P:tRNA modification"/>
    <property type="evidence" value="ECO:0007669"/>
    <property type="project" value="UniProtKB-UniRule"/>
</dbReference>
<dbReference type="CDD" id="cd01992">
    <property type="entry name" value="TilS_N"/>
    <property type="match status" value="1"/>
</dbReference>
<dbReference type="Gene3D" id="3.40.50.620">
    <property type="entry name" value="HUPs"/>
    <property type="match status" value="1"/>
</dbReference>
<dbReference type="HAMAP" id="MF_01161">
    <property type="entry name" value="tRNA_Ile_lys_synt"/>
    <property type="match status" value="1"/>
</dbReference>
<dbReference type="InterPro" id="IPR014729">
    <property type="entry name" value="Rossmann-like_a/b/a_fold"/>
</dbReference>
<dbReference type="InterPro" id="IPR011063">
    <property type="entry name" value="TilS/TtcA_N"/>
</dbReference>
<dbReference type="InterPro" id="IPR012094">
    <property type="entry name" value="tRNA_Ile_lys_synt"/>
</dbReference>
<dbReference type="InterPro" id="IPR012795">
    <property type="entry name" value="tRNA_Ile_lys_synt_N"/>
</dbReference>
<dbReference type="NCBIfam" id="TIGR02432">
    <property type="entry name" value="lysidine_TilS_N"/>
    <property type="match status" value="1"/>
</dbReference>
<dbReference type="PANTHER" id="PTHR43033">
    <property type="entry name" value="TRNA(ILE)-LYSIDINE SYNTHASE-RELATED"/>
    <property type="match status" value="1"/>
</dbReference>
<dbReference type="PANTHER" id="PTHR43033:SF1">
    <property type="entry name" value="TRNA(ILE)-LYSIDINE SYNTHASE-RELATED"/>
    <property type="match status" value="1"/>
</dbReference>
<dbReference type="Pfam" id="PF01171">
    <property type="entry name" value="ATP_bind_3"/>
    <property type="match status" value="1"/>
</dbReference>
<dbReference type="SUPFAM" id="SSF52402">
    <property type="entry name" value="Adenine nucleotide alpha hydrolases-like"/>
    <property type="match status" value="1"/>
</dbReference>
<organism>
    <name type="scientific">Orientia tsutsugamushi (strain Boryong)</name>
    <name type="common">Rickettsia tsutsugamushi</name>
    <dbReference type="NCBI Taxonomy" id="357244"/>
    <lineage>
        <taxon>Bacteria</taxon>
        <taxon>Pseudomonadati</taxon>
        <taxon>Pseudomonadota</taxon>
        <taxon>Alphaproteobacteria</taxon>
        <taxon>Rickettsiales</taxon>
        <taxon>Rickettsiaceae</taxon>
        <taxon>Rickettsieae</taxon>
        <taxon>Orientia</taxon>
    </lineage>
</organism>